<feature type="chain" id="PRO_1000117926" description="Phosphoadenosine 5'-phosphosulfate reductase">
    <location>
        <begin position="1"/>
        <end position="244"/>
    </location>
</feature>
<feature type="active site" description="Nucleophile; cysteine thiosulfonate intermediate" evidence="1">
    <location>
        <position position="239"/>
    </location>
</feature>
<comment type="function">
    <text evidence="1">Catalyzes the formation of sulfite from phosphoadenosine 5'-phosphosulfate (PAPS) using thioredoxin as an electron donor.</text>
</comment>
<comment type="catalytic activity">
    <reaction evidence="1">
        <text>[thioredoxin]-disulfide + sulfite + adenosine 3',5'-bisphosphate + 2 H(+) = [thioredoxin]-dithiol + 3'-phosphoadenylyl sulfate</text>
        <dbReference type="Rhea" id="RHEA:11724"/>
        <dbReference type="Rhea" id="RHEA-COMP:10698"/>
        <dbReference type="Rhea" id="RHEA-COMP:10700"/>
        <dbReference type="ChEBI" id="CHEBI:15378"/>
        <dbReference type="ChEBI" id="CHEBI:17359"/>
        <dbReference type="ChEBI" id="CHEBI:29950"/>
        <dbReference type="ChEBI" id="CHEBI:50058"/>
        <dbReference type="ChEBI" id="CHEBI:58339"/>
        <dbReference type="ChEBI" id="CHEBI:58343"/>
        <dbReference type="EC" id="1.8.4.8"/>
    </reaction>
</comment>
<comment type="pathway">
    <text evidence="1">Sulfur metabolism; hydrogen sulfide biosynthesis; sulfite from sulfate: step 3/3.</text>
</comment>
<comment type="subcellular location">
    <subcellularLocation>
        <location evidence="1">Cytoplasm</location>
    </subcellularLocation>
</comment>
<comment type="similarity">
    <text evidence="1">Belongs to the PAPS reductase family. CysH subfamily.</text>
</comment>
<keyword id="KW-0963">Cytoplasm</keyword>
<keyword id="KW-0560">Oxidoreductase</keyword>
<proteinExistence type="inferred from homology"/>
<accession>B8D7V6</accession>
<organism>
    <name type="scientific">Buchnera aphidicola subsp. Acyrthosiphon pisum (strain Tuc7)</name>
    <dbReference type="NCBI Taxonomy" id="561501"/>
    <lineage>
        <taxon>Bacteria</taxon>
        <taxon>Pseudomonadati</taxon>
        <taxon>Pseudomonadota</taxon>
        <taxon>Gammaproteobacteria</taxon>
        <taxon>Enterobacterales</taxon>
        <taxon>Erwiniaceae</taxon>
        <taxon>Buchnera</taxon>
    </lineage>
</organism>
<sequence>MSKFYIENINLLNSEKKNNILSELNLLLSNYSAEERISWALSHLPHTQIMSSSFGIQSTVLLHLIIKKKPDIPVVLIDTGYLFPETYNFIDFLTNKFHLNLKVFRSTISSAWQEARYGKLWEKGIEGIDFYNNINKVQPMNFALNELSVQTWFAGLRRDQSKSRNLLPYLSIKKGIFKILPILDWSKDKIKDYLKENNLDTHPLYNNGYSSVGDTHTTKKHMPGMLEEETRFFGLKRECGLHEN</sequence>
<dbReference type="EC" id="1.8.4.8" evidence="1"/>
<dbReference type="EMBL" id="CP001158">
    <property type="protein sequence ID" value="ACL30221.1"/>
    <property type="molecule type" value="Genomic_DNA"/>
</dbReference>
<dbReference type="RefSeq" id="WP_012619542.1">
    <property type="nucleotide sequence ID" value="NC_011834.1"/>
</dbReference>
<dbReference type="SMR" id="B8D7V6"/>
<dbReference type="KEGG" id="bau:BUAPTUC7_420"/>
<dbReference type="HOGENOM" id="CLU_044089_3_0_6"/>
<dbReference type="UniPathway" id="UPA00140">
    <property type="reaction ID" value="UER00206"/>
</dbReference>
<dbReference type="GO" id="GO:0005737">
    <property type="term" value="C:cytoplasm"/>
    <property type="evidence" value="ECO:0007669"/>
    <property type="project" value="UniProtKB-SubCell"/>
</dbReference>
<dbReference type="GO" id="GO:0004604">
    <property type="term" value="F:phosphoadenylyl-sulfate reductase (thioredoxin) activity"/>
    <property type="evidence" value="ECO:0007669"/>
    <property type="project" value="UniProtKB-UniRule"/>
</dbReference>
<dbReference type="GO" id="GO:0070814">
    <property type="term" value="P:hydrogen sulfide biosynthetic process"/>
    <property type="evidence" value="ECO:0007669"/>
    <property type="project" value="UniProtKB-UniRule"/>
</dbReference>
<dbReference type="GO" id="GO:0019379">
    <property type="term" value="P:sulfate assimilation, phosphoadenylyl sulfate reduction by phosphoadenylyl-sulfate reductase (thioredoxin)"/>
    <property type="evidence" value="ECO:0007669"/>
    <property type="project" value="UniProtKB-UniRule"/>
</dbReference>
<dbReference type="CDD" id="cd23945">
    <property type="entry name" value="PAPS_reductase"/>
    <property type="match status" value="1"/>
</dbReference>
<dbReference type="Gene3D" id="3.40.50.620">
    <property type="entry name" value="HUPs"/>
    <property type="match status" value="1"/>
</dbReference>
<dbReference type="HAMAP" id="MF_00063">
    <property type="entry name" value="CysH"/>
    <property type="match status" value="1"/>
</dbReference>
<dbReference type="InterPro" id="IPR004511">
    <property type="entry name" value="PAPS/APS_Rdtase"/>
</dbReference>
<dbReference type="InterPro" id="IPR002500">
    <property type="entry name" value="PAPS_reduct_dom"/>
</dbReference>
<dbReference type="InterPro" id="IPR011800">
    <property type="entry name" value="PAPS_reductase_CysH"/>
</dbReference>
<dbReference type="InterPro" id="IPR014729">
    <property type="entry name" value="Rossmann-like_a/b/a_fold"/>
</dbReference>
<dbReference type="NCBIfam" id="TIGR00434">
    <property type="entry name" value="cysH"/>
    <property type="match status" value="1"/>
</dbReference>
<dbReference type="NCBIfam" id="TIGR02057">
    <property type="entry name" value="PAPS_reductase"/>
    <property type="match status" value="1"/>
</dbReference>
<dbReference type="NCBIfam" id="NF002537">
    <property type="entry name" value="PRK02090.1"/>
    <property type="match status" value="1"/>
</dbReference>
<dbReference type="PANTHER" id="PTHR46509">
    <property type="entry name" value="PHOSPHOADENOSINE PHOSPHOSULFATE REDUCTASE"/>
    <property type="match status" value="1"/>
</dbReference>
<dbReference type="PANTHER" id="PTHR46509:SF1">
    <property type="entry name" value="PHOSPHOADENOSINE PHOSPHOSULFATE REDUCTASE"/>
    <property type="match status" value="1"/>
</dbReference>
<dbReference type="Pfam" id="PF01507">
    <property type="entry name" value="PAPS_reduct"/>
    <property type="match status" value="1"/>
</dbReference>
<dbReference type="PIRSF" id="PIRSF000857">
    <property type="entry name" value="PAPS_reductase"/>
    <property type="match status" value="1"/>
</dbReference>
<dbReference type="SUPFAM" id="SSF52402">
    <property type="entry name" value="Adenine nucleotide alpha hydrolases-like"/>
    <property type="match status" value="1"/>
</dbReference>
<evidence type="ECO:0000255" key="1">
    <source>
        <dbReference type="HAMAP-Rule" id="MF_00063"/>
    </source>
</evidence>
<protein>
    <recommendedName>
        <fullName evidence="1">Phosphoadenosine 5'-phosphosulfate reductase</fullName>
        <shortName evidence="1">PAPS reductase</shortName>
        <ecNumber evidence="1">1.8.4.8</ecNumber>
    </recommendedName>
    <alternativeName>
        <fullName evidence="1">3'-phosphoadenylylsulfate reductase</fullName>
    </alternativeName>
    <alternativeName>
        <fullName evidence="1">PAPS reductase, thioredoxin dependent</fullName>
    </alternativeName>
    <alternativeName>
        <fullName evidence="1">PAPS sulfotransferase</fullName>
    </alternativeName>
    <alternativeName>
        <fullName evidence="1">PAdoPS reductase</fullName>
    </alternativeName>
</protein>
<reference key="1">
    <citation type="journal article" date="2009" name="Science">
        <title>The dynamics and time scale of ongoing genomic erosion in symbiotic bacteria.</title>
        <authorList>
            <person name="Moran N.A."/>
            <person name="McLaughlin H.J."/>
            <person name="Sorek R."/>
        </authorList>
    </citation>
    <scope>NUCLEOTIDE SEQUENCE [LARGE SCALE GENOMIC DNA]</scope>
    <source>
        <strain>Tuc7</strain>
    </source>
</reference>
<gene>
    <name evidence="1" type="primary">cysH</name>
    <name type="ordered locus">BUAPTUC7_420</name>
</gene>
<name>CYSH_BUCAT</name>